<evidence type="ECO:0000255" key="1">
    <source>
        <dbReference type="HAMAP-Rule" id="MF_00332"/>
    </source>
</evidence>
<evidence type="ECO:0000256" key="2">
    <source>
        <dbReference type="SAM" id="MobiDB-lite"/>
    </source>
</evidence>
<organism>
    <name type="scientific">Francisella philomiragia subsp. philomiragia (strain ATCC 25017 / CCUG 19701 / FSC 153 / O#319-036)</name>
    <dbReference type="NCBI Taxonomy" id="484022"/>
    <lineage>
        <taxon>Bacteria</taxon>
        <taxon>Pseudomonadati</taxon>
        <taxon>Pseudomonadota</taxon>
        <taxon>Gammaproteobacteria</taxon>
        <taxon>Thiotrichales</taxon>
        <taxon>Francisellaceae</taxon>
        <taxon>Francisella</taxon>
    </lineage>
</organism>
<reference key="1">
    <citation type="submission" date="2007-12" db="EMBL/GenBank/DDBJ databases">
        <title>Complete sequence of chromosome of Francisella philomiragia subsp. philomiragia ATCC 25017.</title>
        <authorList>
            <consortium name="US DOE Joint Genome Institute"/>
            <person name="Copeland A."/>
            <person name="Lucas S."/>
            <person name="Lapidus A."/>
            <person name="Barry K."/>
            <person name="Detter J.C."/>
            <person name="Glavina del Rio T."/>
            <person name="Hammon N."/>
            <person name="Israni S."/>
            <person name="Dalin E."/>
            <person name="Tice H."/>
            <person name="Pitluck S."/>
            <person name="Chain P."/>
            <person name="Malfatti S."/>
            <person name="Shin M."/>
            <person name="Vergez L."/>
            <person name="Schmutz J."/>
            <person name="Larimer F."/>
            <person name="Land M."/>
            <person name="Hauser L."/>
            <person name="Richardson P."/>
        </authorList>
    </citation>
    <scope>NUCLEOTIDE SEQUENCE [LARGE SCALE GENOMIC DNA]</scope>
    <source>
        <strain>ATCC 25017 / CCUG 19701 / FSC 153 / O#319-036</strain>
    </source>
</reference>
<name>DNAK_FRAP2</name>
<gene>
    <name evidence="1" type="primary">dnaK</name>
    <name type="ordered locus">Fphi_1403</name>
</gene>
<dbReference type="EMBL" id="CP000937">
    <property type="protein sequence ID" value="ABZ87628.1"/>
    <property type="molecule type" value="Genomic_DNA"/>
</dbReference>
<dbReference type="SMR" id="B0TYF2"/>
<dbReference type="KEGG" id="fph:Fphi_1403"/>
<dbReference type="eggNOG" id="COG0443">
    <property type="taxonomic scope" value="Bacteria"/>
</dbReference>
<dbReference type="HOGENOM" id="CLU_005965_2_1_6"/>
<dbReference type="GO" id="GO:0005524">
    <property type="term" value="F:ATP binding"/>
    <property type="evidence" value="ECO:0007669"/>
    <property type="project" value="UniProtKB-UniRule"/>
</dbReference>
<dbReference type="GO" id="GO:0140662">
    <property type="term" value="F:ATP-dependent protein folding chaperone"/>
    <property type="evidence" value="ECO:0007669"/>
    <property type="project" value="InterPro"/>
</dbReference>
<dbReference type="GO" id="GO:0051082">
    <property type="term" value="F:unfolded protein binding"/>
    <property type="evidence" value="ECO:0007669"/>
    <property type="project" value="InterPro"/>
</dbReference>
<dbReference type="CDD" id="cd10234">
    <property type="entry name" value="ASKHA_NBD_HSP70_DnaK-like"/>
    <property type="match status" value="1"/>
</dbReference>
<dbReference type="FunFam" id="2.60.34.10:FF:000014">
    <property type="entry name" value="Chaperone protein DnaK HSP70"/>
    <property type="match status" value="1"/>
</dbReference>
<dbReference type="FunFam" id="3.30.30.30:FF:000003">
    <property type="entry name" value="Heat shock protein 9"/>
    <property type="match status" value="1"/>
</dbReference>
<dbReference type="FunFam" id="1.20.1270.10:FF:000001">
    <property type="entry name" value="Molecular chaperone DnaK"/>
    <property type="match status" value="1"/>
</dbReference>
<dbReference type="FunFam" id="3.30.420.40:FF:000004">
    <property type="entry name" value="Molecular chaperone DnaK"/>
    <property type="match status" value="1"/>
</dbReference>
<dbReference type="FunFam" id="3.90.640.10:FF:000003">
    <property type="entry name" value="Molecular chaperone DnaK"/>
    <property type="match status" value="1"/>
</dbReference>
<dbReference type="Gene3D" id="1.20.1270.10">
    <property type="match status" value="1"/>
</dbReference>
<dbReference type="Gene3D" id="3.30.420.40">
    <property type="match status" value="2"/>
</dbReference>
<dbReference type="Gene3D" id="3.90.640.10">
    <property type="entry name" value="Actin, Chain A, domain 4"/>
    <property type="match status" value="1"/>
</dbReference>
<dbReference type="Gene3D" id="2.60.34.10">
    <property type="entry name" value="Substrate Binding Domain Of DNAk, Chain A, domain 1"/>
    <property type="match status" value="1"/>
</dbReference>
<dbReference type="HAMAP" id="MF_00332">
    <property type="entry name" value="DnaK"/>
    <property type="match status" value="1"/>
</dbReference>
<dbReference type="InterPro" id="IPR043129">
    <property type="entry name" value="ATPase_NBD"/>
</dbReference>
<dbReference type="InterPro" id="IPR012725">
    <property type="entry name" value="Chaperone_DnaK"/>
</dbReference>
<dbReference type="InterPro" id="IPR018181">
    <property type="entry name" value="Heat_shock_70_CS"/>
</dbReference>
<dbReference type="InterPro" id="IPR029048">
    <property type="entry name" value="HSP70_C_sf"/>
</dbReference>
<dbReference type="InterPro" id="IPR029047">
    <property type="entry name" value="HSP70_peptide-bd_sf"/>
</dbReference>
<dbReference type="InterPro" id="IPR013126">
    <property type="entry name" value="Hsp_70_fam"/>
</dbReference>
<dbReference type="NCBIfam" id="NF001413">
    <property type="entry name" value="PRK00290.1"/>
    <property type="match status" value="1"/>
</dbReference>
<dbReference type="NCBIfam" id="NF003520">
    <property type="entry name" value="PRK05183.1"/>
    <property type="match status" value="1"/>
</dbReference>
<dbReference type="NCBIfam" id="TIGR02350">
    <property type="entry name" value="prok_dnaK"/>
    <property type="match status" value="1"/>
</dbReference>
<dbReference type="PANTHER" id="PTHR19375">
    <property type="entry name" value="HEAT SHOCK PROTEIN 70KDA"/>
    <property type="match status" value="1"/>
</dbReference>
<dbReference type="Pfam" id="PF00012">
    <property type="entry name" value="HSP70"/>
    <property type="match status" value="1"/>
</dbReference>
<dbReference type="PRINTS" id="PR00301">
    <property type="entry name" value="HEATSHOCK70"/>
</dbReference>
<dbReference type="SUPFAM" id="SSF53067">
    <property type="entry name" value="Actin-like ATPase domain"/>
    <property type="match status" value="2"/>
</dbReference>
<dbReference type="SUPFAM" id="SSF100934">
    <property type="entry name" value="Heat shock protein 70kD (HSP70), C-terminal subdomain"/>
    <property type="match status" value="1"/>
</dbReference>
<dbReference type="SUPFAM" id="SSF100920">
    <property type="entry name" value="Heat shock protein 70kD (HSP70), peptide-binding domain"/>
    <property type="match status" value="1"/>
</dbReference>
<dbReference type="PROSITE" id="PS00297">
    <property type="entry name" value="HSP70_1"/>
    <property type="match status" value="1"/>
</dbReference>
<dbReference type="PROSITE" id="PS00329">
    <property type="entry name" value="HSP70_2"/>
    <property type="match status" value="1"/>
</dbReference>
<dbReference type="PROSITE" id="PS01036">
    <property type="entry name" value="HSP70_3"/>
    <property type="match status" value="1"/>
</dbReference>
<proteinExistence type="inferred from homology"/>
<accession>B0TYF2</accession>
<comment type="function">
    <text evidence="1">Acts as a chaperone.</text>
</comment>
<comment type="induction">
    <text evidence="1">By stress conditions e.g. heat shock.</text>
</comment>
<comment type="similarity">
    <text evidence="1">Belongs to the heat shock protein 70 family.</text>
</comment>
<keyword id="KW-0067">ATP-binding</keyword>
<keyword id="KW-0143">Chaperone</keyword>
<keyword id="KW-0547">Nucleotide-binding</keyword>
<keyword id="KW-0597">Phosphoprotein</keyword>
<keyword id="KW-0346">Stress response</keyword>
<feature type="chain" id="PRO_1000079227" description="Chaperone protein DnaK">
    <location>
        <begin position="1"/>
        <end position="642"/>
    </location>
</feature>
<feature type="region of interest" description="Disordered" evidence="2">
    <location>
        <begin position="607"/>
        <end position="642"/>
    </location>
</feature>
<feature type="compositionally biased region" description="Low complexity" evidence="2">
    <location>
        <begin position="607"/>
        <end position="620"/>
    </location>
</feature>
<feature type="compositionally biased region" description="Acidic residues" evidence="2">
    <location>
        <begin position="628"/>
        <end position="642"/>
    </location>
</feature>
<feature type="modified residue" description="Phosphothreonine; by autocatalysis" evidence="1">
    <location>
        <position position="201"/>
    </location>
</feature>
<sequence>MGKIIGIDLGTTNSCLAIMDGKTAKVIENAEGHRTTPSVVAYTDNGEILVGQAAKRQAVTNPDNTFFAIKRLIGRKYDDKAVQEDIKKKVPYAVIKADNGDAWVATKEGKKMAPPQVSAEVLRKMKKTAEDYLGEPVTEAVITVPAYFNDSQRQATKDAGKIAGLEVKRIINEPTAAALAYGVDSKKGEQTVAVYDLGGGTFDISIIEIADVDGDNQIEVLSTNGDTFLGGEDFDVALMNYLIDEFKKEQGIDLHNDKLALQRVREAAEKAKVELSSAQQTDVNLPYITADATGPKHLNIKVTRAKFESLVSDLVMRSLEPCKKALEDAGLSKSDITEVLLVGGQTRMPLVQEKVKEFFGKEPRKDVNPDEAVAVGAAIQGGVLAGDVKDVLLLDVTPLSLGIETMGGVMTKLIERNTTIPTKKSQVFSTAEDNQPAVTIHVLQGEREMASANKSLGRFDLADIPPAPRGIPQIEVTFDIDANGILNVSAKDKATGKEQNIVIKSSSGLSEDDIEKMVQDAEANAESDKKFHELVSARNTADNLIHSSRKAIAELGDKVSAEEKEKVEEACKDLESVVKGDDKDAIDAKTKALEEVFSPIAQKAYAEQAQAAGAQGGAQAEEPKKDDDVVDADFEDVEDNKK</sequence>
<protein>
    <recommendedName>
        <fullName evidence="1">Chaperone protein DnaK</fullName>
    </recommendedName>
    <alternativeName>
        <fullName evidence="1">HSP70</fullName>
    </alternativeName>
    <alternativeName>
        <fullName evidence="1">Heat shock 70 kDa protein</fullName>
    </alternativeName>
    <alternativeName>
        <fullName evidence="1">Heat shock protein 70</fullName>
    </alternativeName>
</protein>